<keyword id="KW-1185">Reference proteome</keyword>
<name>Y079_METJA</name>
<protein>
    <recommendedName>
        <fullName>Uncharacterized protein MJ0079</fullName>
    </recommendedName>
</protein>
<accession>Q60389</accession>
<dbReference type="EMBL" id="L77117">
    <property type="protein sequence ID" value="AAB98059.1"/>
    <property type="molecule type" value="Genomic_DNA"/>
</dbReference>
<dbReference type="PIR" id="G64309">
    <property type="entry name" value="G64309"/>
</dbReference>
<dbReference type="SMR" id="Q60389"/>
<dbReference type="FunCoup" id="Q60389">
    <property type="interactions" value="2"/>
</dbReference>
<dbReference type="STRING" id="243232.MJ_0079"/>
<dbReference type="PaxDb" id="243232-MJ_0079"/>
<dbReference type="EnsemblBacteria" id="AAB98059">
    <property type="protein sequence ID" value="AAB98059"/>
    <property type="gene ID" value="MJ_0079"/>
</dbReference>
<dbReference type="KEGG" id="mja:MJ_0079"/>
<dbReference type="eggNOG" id="arCOG00436">
    <property type="taxonomic scope" value="Archaea"/>
</dbReference>
<dbReference type="HOGENOM" id="CLU_018678_0_1_2"/>
<dbReference type="InParanoid" id="Q60389"/>
<dbReference type="PhylomeDB" id="Q60389"/>
<dbReference type="Proteomes" id="UP000000805">
    <property type="component" value="Chromosome"/>
</dbReference>
<dbReference type="GO" id="GO:0005524">
    <property type="term" value="F:ATP binding"/>
    <property type="evidence" value="ECO:0007669"/>
    <property type="project" value="InterPro"/>
</dbReference>
<dbReference type="GO" id="GO:0016887">
    <property type="term" value="F:ATP hydrolysis activity"/>
    <property type="evidence" value="ECO:0000318"/>
    <property type="project" value="GO_Central"/>
</dbReference>
<dbReference type="Gene3D" id="3.40.50.300">
    <property type="entry name" value="P-loop containing nucleotide triphosphate hydrolases"/>
    <property type="match status" value="1"/>
</dbReference>
<dbReference type="InterPro" id="IPR003593">
    <property type="entry name" value="AAA+_ATPase"/>
</dbReference>
<dbReference type="InterPro" id="IPR001270">
    <property type="entry name" value="ClpA/B"/>
</dbReference>
<dbReference type="InterPro" id="IPR045427">
    <property type="entry name" value="MoxR"/>
</dbReference>
<dbReference type="InterPro" id="IPR027417">
    <property type="entry name" value="P-loop_NTPase"/>
</dbReference>
<dbReference type="InterPro" id="IPR041538">
    <property type="entry name" value="RavA-like_AAA_lid"/>
</dbReference>
<dbReference type="InterPro" id="IPR050513">
    <property type="entry name" value="RavA_ATPases"/>
</dbReference>
<dbReference type="PANTHER" id="PTHR32204">
    <property type="entry name" value="ATPASE RAVA"/>
    <property type="match status" value="1"/>
</dbReference>
<dbReference type="PANTHER" id="PTHR32204:SF0">
    <property type="entry name" value="ATPASE RAVA"/>
    <property type="match status" value="1"/>
</dbReference>
<dbReference type="Pfam" id="PF17868">
    <property type="entry name" value="AAA_lid_8"/>
    <property type="match status" value="1"/>
</dbReference>
<dbReference type="Pfam" id="PF20030">
    <property type="entry name" value="bpMoxR"/>
    <property type="match status" value="1"/>
</dbReference>
<dbReference type="PRINTS" id="PR00300">
    <property type="entry name" value="CLPPROTEASEA"/>
</dbReference>
<dbReference type="SMART" id="SM00382">
    <property type="entry name" value="AAA"/>
    <property type="match status" value="1"/>
</dbReference>
<dbReference type="SUPFAM" id="SSF52540">
    <property type="entry name" value="P-loop containing nucleoside triphosphate hydrolases"/>
    <property type="match status" value="1"/>
</dbReference>
<reference key="1">
    <citation type="journal article" date="1996" name="Science">
        <title>Complete genome sequence of the methanogenic archaeon, Methanococcus jannaschii.</title>
        <authorList>
            <person name="Bult C.J."/>
            <person name="White O."/>
            <person name="Olsen G.J."/>
            <person name="Zhou L."/>
            <person name="Fleischmann R.D."/>
            <person name="Sutton G.G."/>
            <person name="Blake J.A."/>
            <person name="FitzGerald L.M."/>
            <person name="Clayton R.A."/>
            <person name="Gocayne J.D."/>
            <person name="Kerlavage A.R."/>
            <person name="Dougherty B.A."/>
            <person name="Tomb J.-F."/>
            <person name="Adams M.D."/>
            <person name="Reich C.I."/>
            <person name="Overbeek R."/>
            <person name="Kirkness E.F."/>
            <person name="Weinstock K.G."/>
            <person name="Merrick J.M."/>
            <person name="Glodek A."/>
            <person name="Scott J.L."/>
            <person name="Geoghagen N.S.M."/>
            <person name="Weidman J.F."/>
            <person name="Fuhrmann J.L."/>
            <person name="Nguyen D."/>
            <person name="Utterback T.R."/>
            <person name="Kelley J.M."/>
            <person name="Peterson J.D."/>
            <person name="Sadow P.W."/>
            <person name="Hanna M.C."/>
            <person name="Cotton M.D."/>
            <person name="Roberts K.M."/>
            <person name="Hurst M.A."/>
            <person name="Kaine B.P."/>
            <person name="Borodovsky M."/>
            <person name="Klenk H.-P."/>
            <person name="Fraser C.M."/>
            <person name="Smith H.O."/>
            <person name="Woese C.R."/>
            <person name="Venter J.C."/>
        </authorList>
    </citation>
    <scope>NUCLEOTIDE SEQUENCE [LARGE SCALE GENOMIC DNA]</scope>
    <source>
        <strain>ATCC 43067 / DSM 2661 / JAL-1 / JCM 10045 / NBRC 100440</strain>
    </source>
</reference>
<sequence length="380" mass="44550">MSEIMHKLEKIREELNSYFLERREEIDIALTSILANEHTVFLGNPGVAKSQLIRAIASHINANYFEKLITRFTTEDELFGPLSIKELKDNDRFVRKTSGYLPTAEIAFLDEVFKANSSILNALLSIINERIYHNGDKIEKVPLISLFGASNELPEENELLAFYDRFLFRKVVRGIRSCENLVKLIKLDEEYKPKTTISIKELRKMQEKANEVDIENIIGYLVDIKKKLSQNHIYISDRRFKKSVKAIKCFAYLNGRREAEIEDLEILRHIFWDDIDDILIVSKVIFDITNKYAEQVLDKAEIIKNLKNELKYIDIKKIGECKKDYNKLIEILCKMAYIRLELKKIRNEAIINKRKTDFIDEVIKETDEFNNYIEGILNEL</sequence>
<proteinExistence type="predicted"/>
<gene>
    <name type="ordered locus">MJ0079</name>
</gene>
<organism>
    <name type="scientific">Methanocaldococcus jannaschii (strain ATCC 43067 / DSM 2661 / JAL-1 / JCM 10045 / NBRC 100440)</name>
    <name type="common">Methanococcus jannaschii</name>
    <dbReference type="NCBI Taxonomy" id="243232"/>
    <lineage>
        <taxon>Archaea</taxon>
        <taxon>Methanobacteriati</taxon>
        <taxon>Methanobacteriota</taxon>
        <taxon>Methanomada group</taxon>
        <taxon>Methanococci</taxon>
        <taxon>Methanococcales</taxon>
        <taxon>Methanocaldococcaceae</taxon>
        <taxon>Methanocaldococcus</taxon>
    </lineage>
</organism>
<feature type="chain" id="PRO_0000106685" description="Uncharacterized protein MJ0079">
    <location>
        <begin position="1"/>
        <end position="380"/>
    </location>
</feature>